<keyword id="KW-0067">ATP-binding</keyword>
<keyword id="KW-0963">Cytoplasm</keyword>
<keyword id="KW-0275">Fatty acid biosynthesis</keyword>
<keyword id="KW-0276">Fatty acid metabolism</keyword>
<keyword id="KW-0444">Lipid biosynthesis</keyword>
<keyword id="KW-0443">Lipid metabolism</keyword>
<keyword id="KW-0547">Nucleotide-binding</keyword>
<keyword id="KW-1185">Reference proteome</keyword>
<keyword id="KW-0808">Transferase</keyword>
<proteinExistence type="inferred from homology"/>
<feature type="chain" id="PRO_0000389809" description="Acetyl-coenzyme A carboxylase carboxyl transferase subunit beta">
    <location>
        <begin position="1"/>
        <end position="291"/>
    </location>
</feature>
<feature type="domain" description="CoA carboxyltransferase N-terminal" evidence="2">
    <location>
        <begin position="23"/>
        <end position="291"/>
    </location>
</feature>
<name>ACCD_OPITP</name>
<dbReference type="EC" id="2.1.3.15" evidence="1"/>
<dbReference type="EMBL" id="CP001032">
    <property type="protein sequence ID" value="ACB76803.1"/>
    <property type="molecule type" value="Genomic_DNA"/>
</dbReference>
<dbReference type="RefSeq" id="WP_012376332.1">
    <property type="nucleotide sequence ID" value="NC_010571.1"/>
</dbReference>
<dbReference type="SMR" id="B1ZVD6"/>
<dbReference type="STRING" id="452637.Oter_3526"/>
<dbReference type="KEGG" id="ote:Oter_3526"/>
<dbReference type="eggNOG" id="COG0777">
    <property type="taxonomic scope" value="Bacteria"/>
</dbReference>
<dbReference type="HOGENOM" id="CLU_015486_1_1_0"/>
<dbReference type="OrthoDB" id="9772975at2"/>
<dbReference type="UniPathway" id="UPA00655">
    <property type="reaction ID" value="UER00711"/>
</dbReference>
<dbReference type="Proteomes" id="UP000007013">
    <property type="component" value="Chromosome"/>
</dbReference>
<dbReference type="GO" id="GO:0009317">
    <property type="term" value="C:acetyl-CoA carboxylase complex"/>
    <property type="evidence" value="ECO:0007669"/>
    <property type="project" value="InterPro"/>
</dbReference>
<dbReference type="GO" id="GO:0003989">
    <property type="term" value="F:acetyl-CoA carboxylase activity"/>
    <property type="evidence" value="ECO:0007669"/>
    <property type="project" value="InterPro"/>
</dbReference>
<dbReference type="GO" id="GO:0005524">
    <property type="term" value="F:ATP binding"/>
    <property type="evidence" value="ECO:0007669"/>
    <property type="project" value="UniProtKB-KW"/>
</dbReference>
<dbReference type="GO" id="GO:0016743">
    <property type="term" value="F:carboxyl- or carbamoyltransferase activity"/>
    <property type="evidence" value="ECO:0007669"/>
    <property type="project" value="UniProtKB-UniRule"/>
</dbReference>
<dbReference type="GO" id="GO:0006633">
    <property type="term" value="P:fatty acid biosynthetic process"/>
    <property type="evidence" value="ECO:0007669"/>
    <property type="project" value="UniProtKB-KW"/>
</dbReference>
<dbReference type="GO" id="GO:2001295">
    <property type="term" value="P:malonyl-CoA biosynthetic process"/>
    <property type="evidence" value="ECO:0007669"/>
    <property type="project" value="UniProtKB-UniRule"/>
</dbReference>
<dbReference type="Gene3D" id="3.90.226.10">
    <property type="entry name" value="2-enoyl-CoA Hydratase, Chain A, domain 1"/>
    <property type="match status" value="1"/>
</dbReference>
<dbReference type="HAMAP" id="MF_01395">
    <property type="entry name" value="AcetylCoA_CT_beta"/>
    <property type="match status" value="1"/>
</dbReference>
<dbReference type="InterPro" id="IPR034733">
    <property type="entry name" value="AcCoA_carboxyl_beta"/>
</dbReference>
<dbReference type="InterPro" id="IPR000438">
    <property type="entry name" value="Acetyl_CoA_COase_Trfase_b_su"/>
</dbReference>
<dbReference type="InterPro" id="IPR029045">
    <property type="entry name" value="ClpP/crotonase-like_dom_sf"/>
</dbReference>
<dbReference type="InterPro" id="IPR011762">
    <property type="entry name" value="COA_CT_N"/>
</dbReference>
<dbReference type="NCBIfam" id="TIGR00515">
    <property type="entry name" value="accD"/>
    <property type="match status" value="1"/>
</dbReference>
<dbReference type="PANTHER" id="PTHR42995">
    <property type="entry name" value="ACETYL-COENZYME A CARBOXYLASE CARBOXYL TRANSFERASE SUBUNIT BETA, CHLOROPLASTIC"/>
    <property type="match status" value="1"/>
</dbReference>
<dbReference type="PANTHER" id="PTHR42995:SF5">
    <property type="entry name" value="ACETYL-COENZYME A CARBOXYLASE CARBOXYL TRANSFERASE SUBUNIT BETA, CHLOROPLASTIC"/>
    <property type="match status" value="1"/>
</dbReference>
<dbReference type="Pfam" id="PF01039">
    <property type="entry name" value="Carboxyl_trans"/>
    <property type="match status" value="1"/>
</dbReference>
<dbReference type="PRINTS" id="PR01070">
    <property type="entry name" value="ACCCTRFRASEB"/>
</dbReference>
<dbReference type="SUPFAM" id="SSF52096">
    <property type="entry name" value="ClpP/crotonase"/>
    <property type="match status" value="1"/>
</dbReference>
<dbReference type="PROSITE" id="PS50980">
    <property type="entry name" value="COA_CT_NTER"/>
    <property type="match status" value="1"/>
</dbReference>
<protein>
    <recommendedName>
        <fullName evidence="1">Acetyl-coenzyme A carboxylase carboxyl transferase subunit beta</fullName>
        <shortName evidence="1">ACCase subunit beta</shortName>
        <shortName evidence="1">Acetyl-CoA carboxylase carboxyltransferase subunit beta</shortName>
        <ecNumber evidence="1">2.1.3.15</ecNumber>
    </recommendedName>
</protein>
<reference key="1">
    <citation type="journal article" date="2011" name="J. Bacteriol.">
        <title>Genome sequence of the verrucomicrobium Opitutus terrae PB90-1, an abundant inhabitant of rice paddy soil ecosystems.</title>
        <authorList>
            <person name="van Passel M.W."/>
            <person name="Kant R."/>
            <person name="Palva A."/>
            <person name="Copeland A."/>
            <person name="Lucas S."/>
            <person name="Lapidus A."/>
            <person name="Glavina del Rio T."/>
            <person name="Pitluck S."/>
            <person name="Goltsman E."/>
            <person name="Clum A."/>
            <person name="Sun H."/>
            <person name="Schmutz J."/>
            <person name="Larimer F.W."/>
            <person name="Land M.L."/>
            <person name="Hauser L."/>
            <person name="Kyrpides N."/>
            <person name="Mikhailova N."/>
            <person name="Richardson P.P."/>
            <person name="Janssen P.H."/>
            <person name="de Vos W.M."/>
            <person name="Smidt H."/>
        </authorList>
    </citation>
    <scope>NUCLEOTIDE SEQUENCE [LARGE SCALE GENOMIC DNA]</scope>
    <source>
        <strain>DSM 11246 / JCM 15787 / PB90-1</strain>
    </source>
</reference>
<evidence type="ECO:0000255" key="1">
    <source>
        <dbReference type="HAMAP-Rule" id="MF_01395"/>
    </source>
</evidence>
<evidence type="ECO:0000255" key="2">
    <source>
        <dbReference type="PROSITE-ProRule" id="PRU01136"/>
    </source>
</evidence>
<sequence>MTHFDKPTYTVRKTRKKEIPQGVYTKDPVSGEAVFTKDIADNQMVVPASGHHFPIGARERLGYLLDPGSFVESNIEVRSADPLQFVDSAPYPARIKKYEKESGLPEAVVTGAGKIHGVPVSLAVMDFRFCGGTLGSAAGEKITRAIETAIAQKIPCIIFSTSGGARMQEGILSLMQMAKTSAALGRLAAARLPYISVLTHPTTGGVSASYATLGDVILAEPGALIGFAGPRVIKDTTKQTLPPGFQTSEFLLKHGLIDQIVPRTEMRERLHQILLALYVKQTPASASVAKS</sequence>
<accession>B1ZVD6</accession>
<gene>
    <name evidence="1" type="primary">accD</name>
    <name type="ordered locus">Oter_3526</name>
</gene>
<comment type="function">
    <text evidence="1">Component of the acetyl coenzyme A carboxylase (ACC) complex. Biotin carboxylase (BC) catalyzes the carboxylation of biotin on its carrier protein (BCCP) and then the CO(2) group is transferred by the transcarboxylase to acetyl-CoA to form malonyl-CoA.</text>
</comment>
<comment type="catalytic activity">
    <reaction evidence="1">
        <text>N(6)-carboxybiotinyl-L-lysyl-[protein] + acetyl-CoA = N(6)-biotinyl-L-lysyl-[protein] + malonyl-CoA</text>
        <dbReference type="Rhea" id="RHEA:54728"/>
        <dbReference type="Rhea" id="RHEA-COMP:10505"/>
        <dbReference type="Rhea" id="RHEA-COMP:10506"/>
        <dbReference type="ChEBI" id="CHEBI:57288"/>
        <dbReference type="ChEBI" id="CHEBI:57384"/>
        <dbReference type="ChEBI" id="CHEBI:83144"/>
        <dbReference type="ChEBI" id="CHEBI:83145"/>
        <dbReference type="EC" id="2.1.3.15"/>
    </reaction>
</comment>
<comment type="pathway">
    <text evidence="1">Lipid metabolism; malonyl-CoA biosynthesis; malonyl-CoA from acetyl-CoA: step 1/1.</text>
</comment>
<comment type="subunit">
    <text evidence="1">Acetyl-CoA carboxylase is a heterohexamer composed of biotin carboxyl carrier protein (AccB), biotin carboxylase (AccC) and two subunits each of ACCase subunit alpha (AccA) and ACCase subunit beta (AccD).</text>
</comment>
<comment type="subcellular location">
    <subcellularLocation>
        <location evidence="1">Cytoplasm</location>
    </subcellularLocation>
</comment>
<comment type="similarity">
    <text evidence="1">Belongs to the AccD/PCCB family.</text>
</comment>
<organism>
    <name type="scientific">Opitutus terrae (strain DSM 11246 / JCM 15787 / PB90-1)</name>
    <dbReference type="NCBI Taxonomy" id="452637"/>
    <lineage>
        <taxon>Bacteria</taxon>
        <taxon>Pseudomonadati</taxon>
        <taxon>Verrucomicrobiota</taxon>
        <taxon>Opitutia</taxon>
        <taxon>Opitutales</taxon>
        <taxon>Opitutaceae</taxon>
        <taxon>Opitutus</taxon>
    </lineage>
</organism>